<protein>
    <recommendedName>
        <fullName evidence="1">Large ribosomal subunit protein bL28</fullName>
    </recommendedName>
    <alternativeName>
        <fullName evidence="3">50S ribosomal protein L28</fullName>
    </alternativeName>
</protein>
<sequence length="77" mass="8922">MARVCKVTGKRPMTGNNVSHANNKTKRRFLPNLQYRKFWVESENRWVRLRVSNAALRTIDKVGIDVVLADLRARGEI</sequence>
<gene>
    <name evidence="1" type="primary">rpmB</name>
    <name type="ordered locus">CV_3456</name>
</gene>
<name>RL28_CHRVO</name>
<comment type="similarity">
    <text evidence="1">Belongs to the bacterial ribosomal protein bL28 family.</text>
</comment>
<organism>
    <name type="scientific">Chromobacterium violaceum (strain ATCC 12472 / DSM 30191 / JCM 1249 / CCUG 213 / NBRC 12614 / NCIMB 9131 / NCTC 9757 / MK)</name>
    <dbReference type="NCBI Taxonomy" id="243365"/>
    <lineage>
        <taxon>Bacteria</taxon>
        <taxon>Pseudomonadati</taxon>
        <taxon>Pseudomonadota</taxon>
        <taxon>Betaproteobacteria</taxon>
        <taxon>Neisseriales</taxon>
        <taxon>Chromobacteriaceae</taxon>
        <taxon>Chromobacterium</taxon>
    </lineage>
</organism>
<proteinExistence type="inferred from homology"/>
<dbReference type="EMBL" id="AE016825">
    <property type="protein sequence ID" value="AAQ61117.1"/>
    <property type="molecule type" value="Genomic_DNA"/>
</dbReference>
<dbReference type="RefSeq" id="WP_011137003.1">
    <property type="nucleotide sequence ID" value="NC_005085.1"/>
</dbReference>
<dbReference type="SMR" id="Q7NSH0"/>
<dbReference type="STRING" id="243365.CV_3456"/>
<dbReference type="GeneID" id="97477435"/>
<dbReference type="KEGG" id="cvi:CV_3456"/>
<dbReference type="eggNOG" id="COG0227">
    <property type="taxonomic scope" value="Bacteria"/>
</dbReference>
<dbReference type="HOGENOM" id="CLU_064548_3_1_4"/>
<dbReference type="OrthoDB" id="9805609at2"/>
<dbReference type="Proteomes" id="UP000001424">
    <property type="component" value="Chromosome"/>
</dbReference>
<dbReference type="GO" id="GO:0022625">
    <property type="term" value="C:cytosolic large ribosomal subunit"/>
    <property type="evidence" value="ECO:0007669"/>
    <property type="project" value="TreeGrafter"/>
</dbReference>
<dbReference type="GO" id="GO:0003735">
    <property type="term" value="F:structural constituent of ribosome"/>
    <property type="evidence" value="ECO:0007669"/>
    <property type="project" value="InterPro"/>
</dbReference>
<dbReference type="GO" id="GO:0006412">
    <property type="term" value="P:translation"/>
    <property type="evidence" value="ECO:0007669"/>
    <property type="project" value="UniProtKB-UniRule"/>
</dbReference>
<dbReference type="FunFam" id="2.30.170.40:FF:000001">
    <property type="entry name" value="50S ribosomal protein L28"/>
    <property type="match status" value="1"/>
</dbReference>
<dbReference type="Gene3D" id="2.30.170.40">
    <property type="entry name" value="Ribosomal protein L28/L24"/>
    <property type="match status" value="1"/>
</dbReference>
<dbReference type="HAMAP" id="MF_00373">
    <property type="entry name" value="Ribosomal_bL28"/>
    <property type="match status" value="1"/>
</dbReference>
<dbReference type="InterPro" id="IPR026569">
    <property type="entry name" value="Ribosomal_bL28"/>
</dbReference>
<dbReference type="InterPro" id="IPR034704">
    <property type="entry name" value="Ribosomal_bL28/bL31-like_sf"/>
</dbReference>
<dbReference type="InterPro" id="IPR001383">
    <property type="entry name" value="Ribosomal_bL28_bact-type"/>
</dbReference>
<dbReference type="InterPro" id="IPR037147">
    <property type="entry name" value="Ribosomal_bL28_sf"/>
</dbReference>
<dbReference type="NCBIfam" id="TIGR00009">
    <property type="entry name" value="L28"/>
    <property type="match status" value="1"/>
</dbReference>
<dbReference type="PANTHER" id="PTHR13528">
    <property type="entry name" value="39S RIBOSOMAL PROTEIN L28, MITOCHONDRIAL"/>
    <property type="match status" value="1"/>
</dbReference>
<dbReference type="PANTHER" id="PTHR13528:SF2">
    <property type="entry name" value="LARGE RIBOSOMAL SUBUNIT PROTEIN BL28M"/>
    <property type="match status" value="1"/>
</dbReference>
<dbReference type="Pfam" id="PF00830">
    <property type="entry name" value="Ribosomal_L28"/>
    <property type="match status" value="1"/>
</dbReference>
<dbReference type="SUPFAM" id="SSF143800">
    <property type="entry name" value="L28p-like"/>
    <property type="match status" value="1"/>
</dbReference>
<accession>Q7NSH0</accession>
<feature type="chain" id="PRO_0000178458" description="Large ribosomal subunit protein bL28">
    <location>
        <begin position="1"/>
        <end position="77"/>
    </location>
</feature>
<feature type="region of interest" description="Disordered" evidence="2">
    <location>
        <begin position="1"/>
        <end position="21"/>
    </location>
</feature>
<evidence type="ECO:0000255" key="1">
    <source>
        <dbReference type="HAMAP-Rule" id="MF_00373"/>
    </source>
</evidence>
<evidence type="ECO:0000256" key="2">
    <source>
        <dbReference type="SAM" id="MobiDB-lite"/>
    </source>
</evidence>
<evidence type="ECO:0000305" key="3"/>
<reference key="1">
    <citation type="journal article" date="2003" name="Proc. Natl. Acad. Sci. U.S.A.">
        <title>The complete genome sequence of Chromobacterium violaceum reveals remarkable and exploitable bacterial adaptability.</title>
        <authorList>
            <person name="Vasconcelos A.T.R."/>
            <person name="de Almeida D.F."/>
            <person name="Hungria M."/>
            <person name="Guimaraes C.T."/>
            <person name="Antonio R.V."/>
            <person name="Almeida F.C."/>
            <person name="de Almeida L.G.P."/>
            <person name="de Almeida R."/>
            <person name="Alves-Gomes J.A."/>
            <person name="Andrade E.M."/>
            <person name="Araripe J."/>
            <person name="de Araujo M.F.F."/>
            <person name="Astolfi-Filho S."/>
            <person name="Azevedo V."/>
            <person name="Baptista A.J."/>
            <person name="Bataus L.A.M."/>
            <person name="Batista J.S."/>
            <person name="Belo A."/>
            <person name="van den Berg C."/>
            <person name="Bogo M."/>
            <person name="Bonatto S."/>
            <person name="Bordignon J."/>
            <person name="Brigido M.M."/>
            <person name="Brito C.A."/>
            <person name="Brocchi M."/>
            <person name="Burity H.A."/>
            <person name="Camargo A.A."/>
            <person name="Cardoso D.D.P."/>
            <person name="Carneiro N.P."/>
            <person name="Carraro D.M."/>
            <person name="Carvalho C.M.B."/>
            <person name="Cascardo J.C.M."/>
            <person name="Cavada B.S."/>
            <person name="Chueire L.M.O."/>
            <person name="Creczynski-Pasa T.B."/>
            <person name="Cunha-Junior N.C."/>
            <person name="Fagundes N."/>
            <person name="Falcao C.L."/>
            <person name="Fantinatti F."/>
            <person name="Farias I.P."/>
            <person name="Felipe M.S.S."/>
            <person name="Ferrari L.P."/>
            <person name="Ferro J.A."/>
            <person name="Ferro M.I.T."/>
            <person name="Franco G.R."/>
            <person name="Freitas N.S.A."/>
            <person name="Furlan L.R."/>
            <person name="Gazzinelli R.T."/>
            <person name="Gomes E.A."/>
            <person name="Goncalves P.R."/>
            <person name="Grangeiro T.B."/>
            <person name="Grattapaglia D."/>
            <person name="Grisard E.C."/>
            <person name="Hanna E.S."/>
            <person name="Jardim S.N."/>
            <person name="Laurino J."/>
            <person name="Leoi L.C.T."/>
            <person name="Lima L.F.A."/>
            <person name="Loureiro M.F."/>
            <person name="Lyra M.C.C.P."/>
            <person name="Madeira H.M.F."/>
            <person name="Manfio G.P."/>
            <person name="Maranhao A.Q."/>
            <person name="Martins W.S."/>
            <person name="di Mauro S.M.Z."/>
            <person name="de Medeiros S.R.B."/>
            <person name="Meissner R.V."/>
            <person name="Moreira M.A.M."/>
            <person name="Nascimento F.F."/>
            <person name="Nicolas M.F."/>
            <person name="Oliveira J.G."/>
            <person name="Oliveira S.C."/>
            <person name="Paixao R.F.C."/>
            <person name="Parente J.A."/>
            <person name="Pedrosa F.O."/>
            <person name="Pena S.D.J."/>
            <person name="Pereira J.O."/>
            <person name="Pereira M."/>
            <person name="Pinto L.S.R.C."/>
            <person name="Pinto L.S."/>
            <person name="Porto J.I.R."/>
            <person name="Potrich D.P."/>
            <person name="Ramalho-Neto C.E."/>
            <person name="Reis A.M.M."/>
            <person name="Rigo L.U."/>
            <person name="Rondinelli E."/>
            <person name="Santos E.B.P."/>
            <person name="Santos F.R."/>
            <person name="Schneider M.P.C."/>
            <person name="Seuanez H.N."/>
            <person name="Silva A.M.R."/>
            <person name="da Silva A.L.C."/>
            <person name="Silva D.W."/>
            <person name="Silva R."/>
            <person name="Simoes I.C."/>
            <person name="Simon D."/>
            <person name="Soares C.M.A."/>
            <person name="Soares R.B.A."/>
            <person name="Souza E.M."/>
            <person name="Souza K.R.L."/>
            <person name="Souza R.C."/>
            <person name="Steffens M.B.R."/>
            <person name="Steindel M."/>
            <person name="Teixeira S.R."/>
            <person name="Urmenyi T."/>
            <person name="Vettore A."/>
            <person name="Wassem R."/>
            <person name="Zaha A."/>
            <person name="Simpson A.J.G."/>
        </authorList>
    </citation>
    <scope>NUCLEOTIDE SEQUENCE [LARGE SCALE GENOMIC DNA]</scope>
    <source>
        <strain>ATCC 12472 / DSM 30191 / JCM 1249 / CCUG 213 / NBRC 12614 / NCIMB 9131 / NCTC 9757 / MK</strain>
    </source>
</reference>
<keyword id="KW-1185">Reference proteome</keyword>
<keyword id="KW-0687">Ribonucleoprotein</keyword>
<keyword id="KW-0689">Ribosomal protein</keyword>